<comment type="function">
    <text evidence="5">Transcription repression factor which plays an important role in the establishment of the regional subdivision of the developing brain and in the development of the telencephalon.</text>
</comment>
<comment type="subunit">
    <text evidence="2 5">Interacts with KDM5B (By similarity). Interacts with GRG6/TLE6 (PubMed:16314515). Interacts with TLE1; the interaction is inhibited by interaction with TLE6/GRG6 (PubMed:16314515).</text>
</comment>
<comment type="interaction">
    <interactant intactId="EBI-11166131">
        <id>Q60987</id>
    </interactant>
    <interactant intactId="EBI-26609102">
        <id>Q9Z2D6-1</id>
        <label>Mecp2</label>
    </interactant>
    <organismsDiffer>false</organismsDiffer>
    <experiments>4</experiments>
</comment>
<comment type="interaction">
    <interactant intactId="EBI-11166131">
        <id>Q60987</id>
    </interactant>
    <interactant intactId="EBI-26609115">
        <id>Q9Z2D6-2</id>
        <label>Mecp2</label>
    </interactant>
    <organismsDiffer>false</organismsDiffer>
    <experiments>2</experiments>
</comment>
<comment type="interaction">
    <interactant intactId="EBI-11166131">
        <id>Q60987</id>
    </interactant>
    <interactant intactId="EBI-1644164">
        <id>O43524</id>
        <label>FOXO3</label>
    </interactant>
    <organismsDiffer>true</organismsDiffer>
    <experiments>5</experiments>
</comment>
<comment type="subcellular location">
    <subcellularLocation>
        <location evidence="2">Nucleus</location>
    </subcellularLocation>
</comment>
<comment type="tissue specificity">
    <text>CNS, and nasal half of the retina.</text>
</comment>
<feature type="chain" id="PRO_0000091837" description="Forkhead box protein G1">
    <location>
        <begin position="1"/>
        <end position="481"/>
    </location>
</feature>
<feature type="DNA-binding region" description="Fork-head" evidence="3">
    <location>
        <begin position="172"/>
        <end position="263"/>
    </location>
</feature>
<feature type="region of interest" description="Disordered" evidence="4">
    <location>
        <begin position="31"/>
        <end position="173"/>
    </location>
</feature>
<feature type="region of interest" description="Required for interaction with TLE6" evidence="5">
    <location>
        <begin position="241"/>
        <end position="336"/>
    </location>
</feature>
<feature type="region of interest" description="Interaction with KDM5B" evidence="1">
    <location>
        <begin position="375"/>
        <end position="398"/>
    </location>
</feature>
<feature type="region of interest" description="Disordered" evidence="4">
    <location>
        <begin position="419"/>
        <end position="447"/>
    </location>
</feature>
<feature type="compositionally biased region" description="Basic residues" evidence="4">
    <location>
        <begin position="35"/>
        <end position="57"/>
    </location>
</feature>
<feature type="compositionally biased region" description="Pro residues" evidence="4">
    <location>
        <begin position="58"/>
        <end position="83"/>
    </location>
</feature>
<feature type="compositionally biased region" description="Low complexity" evidence="4">
    <location>
        <begin position="107"/>
        <end position="119"/>
    </location>
</feature>
<feature type="compositionally biased region" description="Basic and acidic residues" evidence="4">
    <location>
        <begin position="134"/>
        <end position="173"/>
    </location>
</feature>
<feature type="compositionally biased region" description="Low complexity" evidence="4">
    <location>
        <begin position="419"/>
        <end position="442"/>
    </location>
</feature>
<accession>Q60987</accession>
<accession>Q80VP3</accession>
<name>FOXG1_MOUSE</name>
<organism>
    <name type="scientific">Mus musculus</name>
    <name type="common">Mouse</name>
    <dbReference type="NCBI Taxonomy" id="10090"/>
    <lineage>
        <taxon>Eukaryota</taxon>
        <taxon>Metazoa</taxon>
        <taxon>Chordata</taxon>
        <taxon>Craniata</taxon>
        <taxon>Vertebrata</taxon>
        <taxon>Euteleostomi</taxon>
        <taxon>Mammalia</taxon>
        <taxon>Eutheria</taxon>
        <taxon>Euarchontoglires</taxon>
        <taxon>Glires</taxon>
        <taxon>Rodentia</taxon>
        <taxon>Myomorpha</taxon>
        <taxon>Muroidea</taxon>
        <taxon>Muridae</taxon>
        <taxon>Murinae</taxon>
        <taxon>Mus</taxon>
        <taxon>Mus</taxon>
    </lineage>
</organism>
<reference key="1">
    <citation type="journal article" date="1996" name="Brain Res. Mol. Brain Res.">
        <title>Characterization of the structure and function of the gene for transcription factor BF-1, an essential regulator of forebrain development.</title>
        <authorList>
            <person name="Li H."/>
            <person name="Tao W."/>
            <person name="Lai E."/>
        </authorList>
    </citation>
    <scope>NUCLEOTIDE SEQUENCE [MRNA]</scope>
</reference>
<reference key="2">
    <citation type="journal article" date="2004" name="Genome Res.">
        <title>The status, quality, and expansion of the NIH full-length cDNA project: the Mammalian Gene Collection (MGC).</title>
        <authorList>
            <consortium name="The MGC Project Team"/>
        </authorList>
    </citation>
    <scope>NUCLEOTIDE SEQUENCE [LARGE SCALE MRNA]</scope>
    <source>
        <tissue>Olfactory epithelium</tissue>
    </source>
</reference>
<reference key="3">
    <citation type="journal article" date="2005" name="Mol. Cell. Biol.">
        <title>Antagonistic effects of Grg6 and Groucho/TLE on the transcription repression activity of brain factor 1/FoxG1 and cortical neuron differentiation.</title>
        <authorList>
            <person name="Marcal N."/>
            <person name="Patel H."/>
            <person name="Dong Z."/>
            <person name="Belanger-Jasmin S."/>
            <person name="Hoffman B."/>
            <person name="Helgason C.D."/>
            <person name="Dang J."/>
            <person name="Stifani S."/>
        </authorList>
    </citation>
    <scope>FUNCTION</scope>
    <scope>INTERACTION WITH TLE6 AND TLE1</scope>
</reference>
<proteinExistence type="evidence at protein level"/>
<gene>
    <name type="primary">Foxg1</name>
    <name type="synonym">Fkhl1</name>
    <name type="synonym">Foxg1b</name>
    <name type="synonym">Hfhbf1</name>
</gene>
<evidence type="ECO:0000250" key="1"/>
<evidence type="ECO:0000250" key="2">
    <source>
        <dbReference type="UniProtKB" id="P55316"/>
    </source>
</evidence>
<evidence type="ECO:0000255" key="3">
    <source>
        <dbReference type="PROSITE-ProRule" id="PRU00089"/>
    </source>
</evidence>
<evidence type="ECO:0000256" key="4">
    <source>
        <dbReference type="SAM" id="MobiDB-lite"/>
    </source>
</evidence>
<evidence type="ECO:0000269" key="5">
    <source>
    </source>
</evidence>
<dbReference type="EMBL" id="U36760">
    <property type="protein sequence ID" value="AAB42158.1"/>
    <property type="molecule type" value="mRNA"/>
</dbReference>
<dbReference type="EMBL" id="BC046958">
    <property type="protein sequence ID" value="AAH46958.2"/>
    <property type="molecule type" value="mRNA"/>
</dbReference>
<dbReference type="CCDS" id="CCDS25899.1"/>
<dbReference type="RefSeq" id="NP_001153584.1">
    <property type="nucleotide sequence ID" value="NM_001160112.1"/>
</dbReference>
<dbReference type="RefSeq" id="NP_032267.1">
    <property type="nucleotide sequence ID" value="NM_008241.3"/>
</dbReference>
<dbReference type="SMR" id="Q60987"/>
<dbReference type="BioGRID" id="200291">
    <property type="interactions" value="5"/>
</dbReference>
<dbReference type="FunCoup" id="Q60987">
    <property type="interactions" value="1834"/>
</dbReference>
<dbReference type="IntAct" id="Q60987">
    <property type="interactions" value="5"/>
</dbReference>
<dbReference type="MINT" id="Q60987"/>
<dbReference type="STRING" id="10090.ENSMUSP00000136372"/>
<dbReference type="iPTMnet" id="Q60987"/>
<dbReference type="PhosphoSitePlus" id="Q60987"/>
<dbReference type="PaxDb" id="10090-ENSMUSP00000136372"/>
<dbReference type="ProteomicsDB" id="271714"/>
<dbReference type="Pumba" id="Q60987"/>
<dbReference type="Antibodypedia" id="9316">
    <property type="antibodies" value="292 antibodies from 32 providers"/>
</dbReference>
<dbReference type="DNASU" id="15228"/>
<dbReference type="Ensembl" id="ENSMUST00000021333.5">
    <property type="protein sequence ID" value="ENSMUSP00000021333.4"/>
    <property type="gene ID" value="ENSMUSG00000020950.11"/>
</dbReference>
<dbReference type="Ensembl" id="ENSMUST00000179669.3">
    <property type="protein sequence ID" value="ENSMUSP00000136372.2"/>
    <property type="gene ID" value="ENSMUSG00000020950.11"/>
</dbReference>
<dbReference type="GeneID" id="15228"/>
<dbReference type="KEGG" id="mmu:15228"/>
<dbReference type="UCSC" id="uc007nmf.2">
    <property type="organism name" value="mouse"/>
</dbReference>
<dbReference type="AGR" id="MGI:1347464"/>
<dbReference type="CTD" id="2290"/>
<dbReference type="MGI" id="MGI:1347464">
    <property type="gene designation" value="Foxg1"/>
</dbReference>
<dbReference type="VEuPathDB" id="HostDB:ENSMUSG00000020950"/>
<dbReference type="eggNOG" id="KOG2294">
    <property type="taxonomic scope" value="Eukaryota"/>
</dbReference>
<dbReference type="GeneTree" id="ENSGT00940000160678"/>
<dbReference type="HOGENOM" id="CLU_040357_1_0_1"/>
<dbReference type="InParanoid" id="Q60987"/>
<dbReference type="OMA" id="AHPMSYS"/>
<dbReference type="OrthoDB" id="45837at9989"/>
<dbReference type="PhylomeDB" id="Q60987"/>
<dbReference type="TreeFam" id="TF316127"/>
<dbReference type="Reactome" id="R-MMU-9617828">
    <property type="pathway name" value="FOXO-mediated transcription of cell cycle genes"/>
</dbReference>
<dbReference type="BioGRID-ORCS" id="15228">
    <property type="hits" value="7 hits in 79 CRISPR screens"/>
</dbReference>
<dbReference type="ChiTaRS" id="Foxg1">
    <property type="organism name" value="mouse"/>
</dbReference>
<dbReference type="PRO" id="PR:Q60987"/>
<dbReference type="Proteomes" id="UP000000589">
    <property type="component" value="Chromosome 12"/>
</dbReference>
<dbReference type="RNAct" id="Q60987">
    <property type="molecule type" value="protein"/>
</dbReference>
<dbReference type="Bgee" id="ENSMUSG00000020950">
    <property type="expression patterns" value="Expressed in cortical plate and 132 other cell types or tissues"/>
</dbReference>
<dbReference type="ExpressionAtlas" id="Q60987">
    <property type="expression patterns" value="baseline and differential"/>
</dbReference>
<dbReference type="GO" id="GO:0005654">
    <property type="term" value="C:nucleoplasm"/>
    <property type="evidence" value="ECO:0000304"/>
    <property type="project" value="Reactome"/>
</dbReference>
<dbReference type="GO" id="GO:0005634">
    <property type="term" value="C:nucleus"/>
    <property type="evidence" value="ECO:0000314"/>
    <property type="project" value="MGI"/>
</dbReference>
<dbReference type="GO" id="GO:0001227">
    <property type="term" value="F:DNA-binding transcription repressor activity, RNA polymerase II-specific"/>
    <property type="evidence" value="ECO:0000305"/>
    <property type="project" value="NTNU_SB"/>
</dbReference>
<dbReference type="GO" id="GO:0043565">
    <property type="term" value="F:sequence-specific DNA binding"/>
    <property type="evidence" value="ECO:0000314"/>
    <property type="project" value="NTNU_SB"/>
</dbReference>
<dbReference type="GO" id="GO:1990837">
    <property type="term" value="F:sequence-specific double-stranded DNA binding"/>
    <property type="evidence" value="ECO:0007669"/>
    <property type="project" value="Ensembl"/>
</dbReference>
<dbReference type="GO" id="GO:0016199">
    <property type="term" value="P:axon midline choice point recognition"/>
    <property type="evidence" value="ECO:0000315"/>
    <property type="project" value="MGI"/>
</dbReference>
<dbReference type="GO" id="GO:0048667">
    <property type="term" value="P:cell morphogenesis involved in neuron differentiation"/>
    <property type="evidence" value="ECO:0000315"/>
    <property type="project" value="MGI"/>
</dbReference>
<dbReference type="GO" id="GO:0021954">
    <property type="term" value="P:central nervous system neuron development"/>
    <property type="evidence" value="ECO:0000315"/>
    <property type="project" value="MGI"/>
</dbReference>
<dbReference type="GO" id="GO:0021953">
    <property type="term" value="P:central nervous system neuron differentiation"/>
    <property type="evidence" value="ECO:0000315"/>
    <property type="project" value="MGI"/>
</dbReference>
<dbReference type="GO" id="GO:0021987">
    <property type="term" value="P:cerebral cortex development"/>
    <property type="evidence" value="ECO:0000314"/>
    <property type="project" value="MGI"/>
</dbReference>
<dbReference type="GO" id="GO:0009953">
    <property type="term" value="P:dorsal/ventral pattern formation"/>
    <property type="evidence" value="ECO:0000315"/>
    <property type="project" value="MGI"/>
</dbReference>
<dbReference type="GO" id="GO:0030900">
    <property type="term" value="P:forebrain development"/>
    <property type="evidence" value="ECO:0000315"/>
    <property type="project" value="MGI"/>
</dbReference>
<dbReference type="GO" id="GO:0042472">
    <property type="term" value="P:inner ear morphogenesis"/>
    <property type="evidence" value="ECO:0000315"/>
    <property type="project" value="MGI"/>
</dbReference>
<dbReference type="GO" id="GO:0045665">
    <property type="term" value="P:negative regulation of neuron differentiation"/>
    <property type="evidence" value="ECO:0000315"/>
    <property type="project" value="MGI"/>
</dbReference>
<dbReference type="GO" id="GO:0000122">
    <property type="term" value="P:negative regulation of transcription by RNA polymerase II"/>
    <property type="evidence" value="ECO:0000314"/>
    <property type="project" value="MGI"/>
</dbReference>
<dbReference type="GO" id="GO:0007405">
    <property type="term" value="P:neuroblast proliferation"/>
    <property type="evidence" value="ECO:0000315"/>
    <property type="project" value="MGI"/>
</dbReference>
<dbReference type="GO" id="GO:0022008">
    <property type="term" value="P:neurogenesis"/>
    <property type="evidence" value="ECO:0000314"/>
    <property type="project" value="MGI"/>
</dbReference>
<dbReference type="GO" id="GO:0048664">
    <property type="term" value="P:neuron fate determination"/>
    <property type="evidence" value="ECO:0000314"/>
    <property type="project" value="MGI"/>
</dbReference>
<dbReference type="GO" id="GO:0045787">
    <property type="term" value="P:positive regulation of cell cycle"/>
    <property type="evidence" value="ECO:0000315"/>
    <property type="project" value="MGI"/>
</dbReference>
<dbReference type="GO" id="GO:0002052">
    <property type="term" value="P:positive regulation of neuroblast proliferation"/>
    <property type="evidence" value="ECO:0000315"/>
    <property type="project" value="MGI"/>
</dbReference>
<dbReference type="GO" id="GO:0045666">
    <property type="term" value="P:positive regulation of neuron differentiation"/>
    <property type="evidence" value="ECO:0000316"/>
    <property type="project" value="MGI"/>
</dbReference>
<dbReference type="GO" id="GO:0021852">
    <property type="term" value="P:pyramidal neuron migration to cerebral cortex"/>
    <property type="evidence" value="ECO:0000314"/>
    <property type="project" value="MGI"/>
</dbReference>
<dbReference type="GO" id="GO:0051726">
    <property type="term" value="P:regulation of cell cycle"/>
    <property type="evidence" value="ECO:0000314"/>
    <property type="project" value="MGI"/>
</dbReference>
<dbReference type="GO" id="GO:0010468">
    <property type="term" value="P:regulation of gene expression"/>
    <property type="evidence" value="ECO:0000315"/>
    <property type="project" value="MGI"/>
</dbReference>
<dbReference type="GO" id="GO:0007346">
    <property type="term" value="P:regulation of mitotic cell cycle"/>
    <property type="evidence" value="ECO:0000315"/>
    <property type="project" value="MGI"/>
</dbReference>
<dbReference type="GO" id="GO:2000177">
    <property type="term" value="P:regulation of neural precursor cell proliferation"/>
    <property type="evidence" value="ECO:0000316"/>
    <property type="project" value="MGI"/>
</dbReference>
<dbReference type="CDD" id="cd20021">
    <property type="entry name" value="FH_FOXG"/>
    <property type="match status" value="1"/>
</dbReference>
<dbReference type="FunFam" id="1.10.10.10:FF:000135">
    <property type="entry name" value="forkhead box protein G1"/>
    <property type="match status" value="1"/>
</dbReference>
<dbReference type="Gene3D" id="1.10.10.10">
    <property type="entry name" value="Winged helix-like DNA-binding domain superfamily/Winged helix DNA-binding domain"/>
    <property type="match status" value="1"/>
</dbReference>
<dbReference type="InterPro" id="IPR001766">
    <property type="entry name" value="Fork_head_dom"/>
</dbReference>
<dbReference type="InterPro" id="IPR047208">
    <property type="entry name" value="FOXG1"/>
</dbReference>
<dbReference type="InterPro" id="IPR018122">
    <property type="entry name" value="TF_fork_head_CS_1"/>
</dbReference>
<dbReference type="InterPro" id="IPR030456">
    <property type="entry name" value="TF_fork_head_CS_2"/>
</dbReference>
<dbReference type="InterPro" id="IPR036388">
    <property type="entry name" value="WH-like_DNA-bd_sf"/>
</dbReference>
<dbReference type="InterPro" id="IPR036390">
    <property type="entry name" value="WH_DNA-bd_sf"/>
</dbReference>
<dbReference type="PANTHER" id="PTHR46617">
    <property type="entry name" value="FORKHEAD BOX PROTEIN G1"/>
    <property type="match status" value="1"/>
</dbReference>
<dbReference type="PANTHER" id="PTHR46617:SF3">
    <property type="entry name" value="FORKHEAD BOX PROTEIN G1"/>
    <property type="match status" value="1"/>
</dbReference>
<dbReference type="Pfam" id="PF00250">
    <property type="entry name" value="Forkhead"/>
    <property type="match status" value="1"/>
</dbReference>
<dbReference type="PRINTS" id="PR00053">
    <property type="entry name" value="FORKHEAD"/>
</dbReference>
<dbReference type="SMART" id="SM00339">
    <property type="entry name" value="FH"/>
    <property type="match status" value="1"/>
</dbReference>
<dbReference type="SUPFAM" id="SSF81995">
    <property type="entry name" value="beta-sandwich domain of Sec23/24"/>
    <property type="match status" value="1"/>
</dbReference>
<dbReference type="SUPFAM" id="SSF46785">
    <property type="entry name" value="Winged helix' DNA-binding domain"/>
    <property type="match status" value="1"/>
</dbReference>
<dbReference type="PROSITE" id="PS00657">
    <property type="entry name" value="FORK_HEAD_1"/>
    <property type="match status" value="1"/>
</dbReference>
<dbReference type="PROSITE" id="PS00658">
    <property type="entry name" value="FORK_HEAD_2"/>
    <property type="match status" value="1"/>
</dbReference>
<dbReference type="PROSITE" id="PS50039">
    <property type="entry name" value="FORK_HEAD_3"/>
    <property type="match status" value="1"/>
</dbReference>
<protein>
    <recommendedName>
        <fullName>Forkhead box protein G1</fullName>
        <shortName>FoxG1</shortName>
    </recommendedName>
    <alternativeName>
        <fullName>Brain factor 1</fullName>
        <shortName>BF-1</shortName>
        <shortName>BF1</shortName>
    </alternativeName>
    <alternativeName>
        <fullName>Forkhead-related protein FKHL1</fullName>
    </alternativeName>
</protein>
<sequence length="481" mass="51625">MLDMGDRKEVKMIPKSSFSINSLVPEAVQNDNHHASHGHHNSHHPQHHHHHHHHHHPPPPAPQPPPPPPQQQQQQPPPAPQPPQARGAPAADDDKGPQPLLLPPSTALDGAKADALGAKGEPGGGPAELAPVGPDEKEKGAGAGGEEKKGAGEGGKDGEGGKEGDKKNGKYEKPPFSYNALIMMAIRQSPEKRLTLNGIYEFIMKNFPYYRENKQGWQNSIRHNLSLNKCFVKVPRHYDDPGKGNYWMLDPSSDDVFIGGTTGKLRRRSTTSRAKLAFKRGARLTSTGLTFMDRAGSLYWPMSPFLSLHHPRASSTLSYNGTTSAYPSHPMPYSSVLTQNSLGNNHSFSTANGLSVDRLVNGEIPYATHHLTAAALAASVPCGLSVPCSGTYSLNPCSVNLLAGQTSYFFPHVPHPSMTSQTSTSMSARAASSSTSPQAPSTLPCESLRPSLPSFTTGLSGGLSDYFTHQNQGSSSNPLIH</sequence>
<keyword id="KW-0217">Developmental protein</keyword>
<keyword id="KW-0238">DNA-binding</keyword>
<keyword id="KW-0539">Nucleus</keyword>
<keyword id="KW-1185">Reference proteome</keyword>
<keyword id="KW-0804">Transcription</keyword>
<keyword id="KW-0805">Transcription regulation</keyword>